<organism>
    <name type="scientific">Streptococcus pneumoniae (strain ATCC 700669 / Spain 23F-1)</name>
    <dbReference type="NCBI Taxonomy" id="561276"/>
    <lineage>
        <taxon>Bacteria</taxon>
        <taxon>Bacillati</taxon>
        <taxon>Bacillota</taxon>
        <taxon>Bacilli</taxon>
        <taxon>Lactobacillales</taxon>
        <taxon>Streptococcaceae</taxon>
        <taxon>Streptococcus</taxon>
    </lineage>
</organism>
<evidence type="ECO:0000255" key="1">
    <source>
        <dbReference type="HAMAP-Rule" id="MF_00362"/>
    </source>
</evidence>
<evidence type="ECO:0000305" key="2"/>
<gene>
    <name evidence="1" type="primary">rplJ</name>
    <name type="ordered locus">SPN23F13200</name>
</gene>
<feature type="chain" id="PRO_1000195567" description="Large ribosomal subunit protein uL10">
    <location>
        <begin position="1"/>
        <end position="166"/>
    </location>
</feature>
<name>RL10_STRPJ</name>
<sequence>MSEAIIAKKAELVDVVAEKMKAAASIVVVDARGLTVEQDTVLRRELRGSEVEYKVIKNSILRRAAEKAGLEDLASVFVGPSAVAFSNEDVIAPAKILNDFSKNAEALEIKGGAIEGAVASKEEILALATLPNREGLLSMLLSVLQAPVRNVALAVKAVAESKEDAA</sequence>
<keyword id="KW-0687">Ribonucleoprotein</keyword>
<keyword id="KW-0689">Ribosomal protein</keyword>
<keyword id="KW-0694">RNA-binding</keyword>
<keyword id="KW-0699">rRNA-binding</keyword>
<comment type="function">
    <text evidence="1">Forms part of the ribosomal stalk, playing a central role in the interaction of the ribosome with GTP-bound translation factors.</text>
</comment>
<comment type="subunit">
    <text evidence="1">Part of the ribosomal stalk of the 50S ribosomal subunit. The N-terminus interacts with L11 and the large rRNA to form the base of the stalk. The C-terminus forms an elongated spine to which L12 dimers bind in a sequential fashion forming a multimeric L10(L12)X complex.</text>
</comment>
<comment type="similarity">
    <text evidence="1">Belongs to the universal ribosomal protein uL10 family.</text>
</comment>
<protein>
    <recommendedName>
        <fullName evidence="1">Large ribosomal subunit protein uL10</fullName>
    </recommendedName>
    <alternativeName>
        <fullName evidence="2">50S ribosomal protein L10</fullName>
    </alternativeName>
</protein>
<accession>B8ZKK4</accession>
<proteinExistence type="inferred from homology"/>
<dbReference type="EMBL" id="FM211187">
    <property type="protein sequence ID" value="CAR69121.1"/>
    <property type="molecule type" value="Genomic_DNA"/>
</dbReference>
<dbReference type="RefSeq" id="WP_001287278.1">
    <property type="nucleotide sequence ID" value="NC_011900.1"/>
</dbReference>
<dbReference type="SMR" id="B8ZKK4"/>
<dbReference type="GeneID" id="45653385"/>
<dbReference type="KEGG" id="sne:SPN23F13200"/>
<dbReference type="HOGENOM" id="CLU_092227_2_0_9"/>
<dbReference type="GO" id="GO:0015934">
    <property type="term" value="C:large ribosomal subunit"/>
    <property type="evidence" value="ECO:0007669"/>
    <property type="project" value="InterPro"/>
</dbReference>
<dbReference type="GO" id="GO:0070180">
    <property type="term" value="F:large ribosomal subunit rRNA binding"/>
    <property type="evidence" value="ECO:0007669"/>
    <property type="project" value="UniProtKB-UniRule"/>
</dbReference>
<dbReference type="GO" id="GO:0003735">
    <property type="term" value="F:structural constituent of ribosome"/>
    <property type="evidence" value="ECO:0007669"/>
    <property type="project" value="InterPro"/>
</dbReference>
<dbReference type="GO" id="GO:0006412">
    <property type="term" value="P:translation"/>
    <property type="evidence" value="ECO:0007669"/>
    <property type="project" value="UniProtKB-UniRule"/>
</dbReference>
<dbReference type="CDD" id="cd05797">
    <property type="entry name" value="Ribosomal_L10"/>
    <property type="match status" value="1"/>
</dbReference>
<dbReference type="FunFam" id="3.30.70.1730:FF:000001">
    <property type="entry name" value="50S ribosomal protein L10"/>
    <property type="match status" value="1"/>
</dbReference>
<dbReference type="Gene3D" id="3.30.70.1730">
    <property type="match status" value="1"/>
</dbReference>
<dbReference type="HAMAP" id="MF_00362">
    <property type="entry name" value="Ribosomal_uL10"/>
    <property type="match status" value="1"/>
</dbReference>
<dbReference type="InterPro" id="IPR001790">
    <property type="entry name" value="Ribosomal_uL10"/>
</dbReference>
<dbReference type="InterPro" id="IPR043141">
    <property type="entry name" value="Ribosomal_uL10-like_sf"/>
</dbReference>
<dbReference type="InterPro" id="IPR022973">
    <property type="entry name" value="Ribosomal_uL10_bac"/>
</dbReference>
<dbReference type="InterPro" id="IPR047865">
    <property type="entry name" value="Ribosomal_uL10_bac_type"/>
</dbReference>
<dbReference type="InterPro" id="IPR002363">
    <property type="entry name" value="Ribosomal_uL10_CS_bac"/>
</dbReference>
<dbReference type="NCBIfam" id="NF000955">
    <property type="entry name" value="PRK00099.1-1"/>
    <property type="match status" value="1"/>
</dbReference>
<dbReference type="PANTHER" id="PTHR11560">
    <property type="entry name" value="39S RIBOSOMAL PROTEIN L10, MITOCHONDRIAL"/>
    <property type="match status" value="1"/>
</dbReference>
<dbReference type="Pfam" id="PF00466">
    <property type="entry name" value="Ribosomal_L10"/>
    <property type="match status" value="1"/>
</dbReference>
<dbReference type="SUPFAM" id="SSF160369">
    <property type="entry name" value="Ribosomal protein L10-like"/>
    <property type="match status" value="1"/>
</dbReference>
<dbReference type="PROSITE" id="PS01109">
    <property type="entry name" value="RIBOSOMAL_L10"/>
    <property type="match status" value="1"/>
</dbReference>
<reference key="1">
    <citation type="journal article" date="2009" name="J. Bacteriol.">
        <title>Role of conjugative elements in the evolution of the multidrug-resistant pandemic clone Streptococcus pneumoniae Spain23F ST81.</title>
        <authorList>
            <person name="Croucher N.J."/>
            <person name="Walker D."/>
            <person name="Romero P."/>
            <person name="Lennard N."/>
            <person name="Paterson G.K."/>
            <person name="Bason N.C."/>
            <person name="Mitchell A.M."/>
            <person name="Quail M.A."/>
            <person name="Andrew P.W."/>
            <person name="Parkhill J."/>
            <person name="Bentley S.D."/>
            <person name="Mitchell T.J."/>
        </authorList>
    </citation>
    <scope>NUCLEOTIDE SEQUENCE [LARGE SCALE GENOMIC DNA]</scope>
    <source>
        <strain>ATCC 700669 / Spain 23F-1</strain>
    </source>
</reference>